<organism>
    <name type="scientific">Dehalococcoides mccartyi (strain ATCC BAA-2266 / KCTC 15142 / 195)</name>
    <name type="common">Dehalococcoides ethenogenes (strain 195)</name>
    <dbReference type="NCBI Taxonomy" id="243164"/>
    <lineage>
        <taxon>Bacteria</taxon>
        <taxon>Bacillati</taxon>
        <taxon>Chloroflexota</taxon>
        <taxon>Dehalococcoidia</taxon>
        <taxon>Dehalococcoidales</taxon>
        <taxon>Dehalococcoidaceae</taxon>
        <taxon>Dehalococcoides</taxon>
    </lineage>
</organism>
<name>RL9_DEHM1</name>
<reference key="1">
    <citation type="journal article" date="2005" name="Science">
        <title>Genome sequence of the PCE-dechlorinating bacterium Dehalococcoides ethenogenes.</title>
        <authorList>
            <person name="Seshadri R."/>
            <person name="Adrian L."/>
            <person name="Fouts D.E."/>
            <person name="Eisen J.A."/>
            <person name="Phillippy A.M."/>
            <person name="Methe B.A."/>
            <person name="Ward N.L."/>
            <person name="Nelson W.C."/>
            <person name="DeBoy R.T."/>
            <person name="Khouri H.M."/>
            <person name="Kolonay J.F."/>
            <person name="Dodson R.J."/>
            <person name="Daugherty S.C."/>
            <person name="Brinkac L.M."/>
            <person name="Sullivan S.A."/>
            <person name="Madupu R."/>
            <person name="Nelson K.E."/>
            <person name="Kang K.H."/>
            <person name="Impraim M."/>
            <person name="Tran K."/>
            <person name="Robinson J.M."/>
            <person name="Forberger H.A."/>
            <person name="Fraser C.M."/>
            <person name="Zinder S.H."/>
            <person name="Heidelberg J.F."/>
        </authorList>
    </citation>
    <scope>NUCLEOTIDE SEQUENCE [LARGE SCALE GENOMIC DNA]</scope>
    <source>
        <strain>ATCC BAA-2266 / KCTC 15142 / 195</strain>
    </source>
</reference>
<proteinExistence type="inferred from homology"/>
<comment type="function">
    <text evidence="1">Binds to the 23S rRNA.</text>
</comment>
<comment type="similarity">
    <text evidence="1">Belongs to the bacterial ribosomal protein bL9 family.</text>
</comment>
<gene>
    <name evidence="1" type="primary">rplI</name>
    <name type="ordered locus">DET0541</name>
</gene>
<evidence type="ECO:0000255" key="1">
    <source>
        <dbReference type="HAMAP-Rule" id="MF_00503"/>
    </source>
</evidence>
<evidence type="ECO:0000305" key="2"/>
<dbReference type="EMBL" id="CP000027">
    <property type="protein sequence ID" value="AAW40169.1"/>
    <property type="molecule type" value="Genomic_DNA"/>
</dbReference>
<dbReference type="RefSeq" id="WP_010936318.1">
    <property type="nucleotide sequence ID" value="NC_002936.3"/>
</dbReference>
<dbReference type="SMR" id="Q3Z914"/>
<dbReference type="FunCoup" id="Q3Z914">
    <property type="interactions" value="391"/>
</dbReference>
<dbReference type="STRING" id="243164.DET0541"/>
<dbReference type="GeneID" id="3230133"/>
<dbReference type="KEGG" id="det:DET0541"/>
<dbReference type="PATRIC" id="fig|243164.10.peg.518"/>
<dbReference type="eggNOG" id="COG0359">
    <property type="taxonomic scope" value="Bacteria"/>
</dbReference>
<dbReference type="HOGENOM" id="CLU_078938_3_0_0"/>
<dbReference type="InParanoid" id="Q3Z914"/>
<dbReference type="Proteomes" id="UP000008289">
    <property type="component" value="Chromosome"/>
</dbReference>
<dbReference type="GO" id="GO:1990904">
    <property type="term" value="C:ribonucleoprotein complex"/>
    <property type="evidence" value="ECO:0007669"/>
    <property type="project" value="UniProtKB-KW"/>
</dbReference>
<dbReference type="GO" id="GO:0005840">
    <property type="term" value="C:ribosome"/>
    <property type="evidence" value="ECO:0007669"/>
    <property type="project" value="UniProtKB-KW"/>
</dbReference>
<dbReference type="GO" id="GO:0019843">
    <property type="term" value="F:rRNA binding"/>
    <property type="evidence" value="ECO:0007669"/>
    <property type="project" value="UniProtKB-UniRule"/>
</dbReference>
<dbReference type="GO" id="GO:0003735">
    <property type="term" value="F:structural constituent of ribosome"/>
    <property type="evidence" value="ECO:0007669"/>
    <property type="project" value="InterPro"/>
</dbReference>
<dbReference type="GO" id="GO:0006412">
    <property type="term" value="P:translation"/>
    <property type="evidence" value="ECO:0007669"/>
    <property type="project" value="UniProtKB-UniRule"/>
</dbReference>
<dbReference type="Gene3D" id="3.10.430.100">
    <property type="entry name" value="Ribosomal protein L9, C-terminal domain"/>
    <property type="match status" value="1"/>
</dbReference>
<dbReference type="Gene3D" id="3.40.5.10">
    <property type="entry name" value="Ribosomal protein L9, N-terminal domain"/>
    <property type="match status" value="1"/>
</dbReference>
<dbReference type="HAMAP" id="MF_00503">
    <property type="entry name" value="Ribosomal_bL9"/>
    <property type="match status" value="1"/>
</dbReference>
<dbReference type="InterPro" id="IPR000244">
    <property type="entry name" value="Ribosomal_bL9"/>
</dbReference>
<dbReference type="InterPro" id="IPR009027">
    <property type="entry name" value="Ribosomal_bL9/RNase_H1_N"/>
</dbReference>
<dbReference type="InterPro" id="IPR020594">
    <property type="entry name" value="Ribosomal_bL9_bac/chp"/>
</dbReference>
<dbReference type="InterPro" id="IPR020069">
    <property type="entry name" value="Ribosomal_bL9_C"/>
</dbReference>
<dbReference type="InterPro" id="IPR036791">
    <property type="entry name" value="Ribosomal_bL9_C_sf"/>
</dbReference>
<dbReference type="InterPro" id="IPR020070">
    <property type="entry name" value="Ribosomal_bL9_N"/>
</dbReference>
<dbReference type="InterPro" id="IPR036935">
    <property type="entry name" value="Ribosomal_bL9_N_sf"/>
</dbReference>
<dbReference type="NCBIfam" id="TIGR00158">
    <property type="entry name" value="L9"/>
    <property type="match status" value="1"/>
</dbReference>
<dbReference type="PANTHER" id="PTHR21368">
    <property type="entry name" value="50S RIBOSOMAL PROTEIN L9"/>
    <property type="match status" value="1"/>
</dbReference>
<dbReference type="Pfam" id="PF03948">
    <property type="entry name" value="Ribosomal_L9_C"/>
    <property type="match status" value="1"/>
</dbReference>
<dbReference type="Pfam" id="PF01281">
    <property type="entry name" value="Ribosomal_L9_N"/>
    <property type="match status" value="1"/>
</dbReference>
<dbReference type="SUPFAM" id="SSF55658">
    <property type="entry name" value="L9 N-domain-like"/>
    <property type="match status" value="1"/>
</dbReference>
<dbReference type="SUPFAM" id="SSF55653">
    <property type="entry name" value="Ribosomal protein L9 C-domain"/>
    <property type="match status" value="1"/>
</dbReference>
<dbReference type="PROSITE" id="PS00651">
    <property type="entry name" value="RIBOSOMAL_L9"/>
    <property type="match status" value="1"/>
</dbReference>
<protein>
    <recommendedName>
        <fullName evidence="1">Large ribosomal subunit protein bL9</fullName>
    </recommendedName>
    <alternativeName>
        <fullName evidence="2">50S ribosomal protein L9</fullName>
    </alternativeName>
</protein>
<accession>Q3Z914</accession>
<keyword id="KW-0687">Ribonucleoprotein</keyword>
<keyword id="KW-0689">Ribosomal protein</keyword>
<keyword id="KW-0694">RNA-binding</keyword>
<keyword id="KW-0699">rRNA-binding</keyword>
<feature type="chain" id="PRO_0000236515" description="Large ribosomal subunit protein bL9">
    <location>
        <begin position="1"/>
        <end position="151"/>
    </location>
</feature>
<sequence length="151" mass="16438">MKVAFLKDVPGRGKTGDVKEVNDGYARNYLIPNKLAMPASASVTSEIAAKQAAEDRRKAKAEAEMAQLAKELDGTNVSIKAKTGAKDKLYGQVTTTVIAAEIEKQTGKAIDKRKLELSEPIRQLGSYEVVIRFNKDLSSKINLIITAEENT</sequence>